<feature type="chain" id="PRO_0000155190" description="Phosphate-specific transport system accessory protein PhoU homolog 2">
    <location>
        <begin position="1"/>
        <end position="217"/>
    </location>
</feature>
<accession>O27765</accession>
<dbReference type="EMBL" id="AE000666">
    <property type="protein sequence ID" value="AAB86202.1"/>
    <property type="molecule type" value="Genomic_DNA"/>
</dbReference>
<dbReference type="PIR" id="F69098">
    <property type="entry name" value="F69098"/>
</dbReference>
<dbReference type="RefSeq" id="WP_010877338.1">
    <property type="nucleotide sequence ID" value="NC_000916.1"/>
</dbReference>
<dbReference type="SMR" id="O27765"/>
<dbReference type="STRING" id="187420.MTH_1732"/>
<dbReference type="PaxDb" id="187420-MTH_1732"/>
<dbReference type="EnsemblBacteria" id="AAB86202">
    <property type="protein sequence ID" value="AAB86202"/>
    <property type="gene ID" value="MTH_1732"/>
</dbReference>
<dbReference type="GeneID" id="1470817"/>
<dbReference type="KEGG" id="mth:MTH_1732"/>
<dbReference type="PATRIC" id="fig|187420.15.peg.1691"/>
<dbReference type="HOGENOM" id="CLU_078518_3_0_2"/>
<dbReference type="InParanoid" id="O27765"/>
<dbReference type="Proteomes" id="UP000005223">
    <property type="component" value="Chromosome"/>
</dbReference>
<dbReference type="GO" id="GO:0005737">
    <property type="term" value="C:cytoplasm"/>
    <property type="evidence" value="ECO:0000250"/>
    <property type="project" value="UniProtKB"/>
</dbReference>
<dbReference type="GO" id="GO:0042803">
    <property type="term" value="F:protein homodimerization activity"/>
    <property type="evidence" value="ECO:0000250"/>
    <property type="project" value="UniProtKB"/>
</dbReference>
<dbReference type="GO" id="GO:0030643">
    <property type="term" value="P:intracellular phosphate ion homeostasis"/>
    <property type="evidence" value="ECO:0007669"/>
    <property type="project" value="InterPro"/>
</dbReference>
<dbReference type="GO" id="GO:0045936">
    <property type="term" value="P:negative regulation of phosphate metabolic process"/>
    <property type="evidence" value="ECO:0000250"/>
    <property type="project" value="UniProtKB"/>
</dbReference>
<dbReference type="GO" id="GO:2000186">
    <property type="term" value="P:negative regulation of phosphate transmembrane transport"/>
    <property type="evidence" value="ECO:0000250"/>
    <property type="project" value="UniProtKB"/>
</dbReference>
<dbReference type="GO" id="GO:0006817">
    <property type="term" value="P:phosphate ion transport"/>
    <property type="evidence" value="ECO:0007669"/>
    <property type="project" value="UniProtKB-KW"/>
</dbReference>
<dbReference type="FunFam" id="1.20.58.220:FF:000004">
    <property type="entry name" value="Phosphate-specific transport system accessory protein PhoU"/>
    <property type="match status" value="1"/>
</dbReference>
<dbReference type="Gene3D" id="1.20.58.220">
    <property type="entry name" value="Phosphate transport system protein phou homolog 2, domain 2"/>
    <property type="match status" value="1"/>
</dbReference>
<dbReference type="InterPro" id="IPR028366">
    <property type="entry name" value="P_transport_PhoU"/>
</dbReference>
<dbReference type="InterPro" id="IPR038078">
    <property type="entry name" value="PhoU-like_sf"/>
</dbReference>
<dbReference type="InterPro" id="IPR026022">
    <property type="entry name" value="PhoU_dom"/>
</dbReference>
<dbReference type="PANTHER" id="PTHR42930">
    <property type="entry name" value="PHOSPHATE-SPECIFIC TRANSPORT SYSTEM ACCESSORY PROTEIN PHOU"/>
    <property type="match status" value="1"/>
</dbReference>
<dbReference type="PANTHER" id="PTHR42930:SF3">
    <property type="entry name" value="PHOSPHATE-SPECIFIC TRANSPORT SYSTEM ACCESSORY PROTEIN PHOU"/>
    <property type="match status" value="1"/>
</dbReference>
<dbReference type="Pfam" id="PF01895">
    <property type="entry name" value="PhoU"/>
    <property type="match status" value="1"/>
</dbReference>
<dbReference type="PIRSF" id="PIRSF003107">
    <property type="entry name" value="PhoU"/>
    <property type="match status" value="1"/>
</dbReference>
<dbReference type="SUPFAM" id="SSF109755">
    <property type="entry name" value="PhoU-like"/>
    <property type="match status" value="1"/>
</dbReference>
<proteinExistence type="inferred from homology"/>
<evidence type="ECO:0000250" key="1"/>
<evidence type="ECO:0000305" key="2"/>
<protein>
    <recommendedName>
        <fullName>Phosphate-specific transport system accessory protein PhoU homolog 2</fullName>
        <shortName>Pst system accessory protein PhoU homolog 2</shortName>
    </recommendedName>
</protein>
<gene>
    <name type="ordered locus">MTH_1732</name>
</gene>
<sequence length="217" mass="24914">MWKLIGALLESRLSNVLDETVRYGNETSERVGRTVSSYIKGDEETARELIETTAAVNEKSYRIEDECLKILGLHQPVAKDLRLASSIMRSAIELERINILLAYIARYAIDGRDRTPPHIEFMSQTVQDMINDALGALMNRDIQLLKRSTRNYIQLQDLYNQLQESNRDFSESGNLMLVARNLLSMGHHVMGMDDRIAYLIVGKRVIHHKVFYSVLMK</sequence>
<comment type="function">
    <text evidence="1">Plays a role in the regulation of phosphate uptake.</text>
</comment>
<comment type="subunit">
    <text evidence="1">Homodimer.</text>
</comment>
<comment type="subcellular location">
    <subcellularLocation>
        <location evidence="1">Cytoplasm</location>
    </subcellularLocation>
</comment>
<comment type="similarity">
    <text evidence="2">Belongs to the PhoU family.</text>
</comment>
<reference key="1">
    <citation type="journal article" date="1997" name="J. Bacteriol.">
        <title>Complete genome sequence of Methanobacterium thermoautotrophicum deltaH: functional analysis and comparative genomics.</title>
        <authorList>
            <person name="Smith D.R."/>
            <person name="Doucette-Stamm L.A."/>
            <person name="Deloughery C."/>
            <person name="Lee H.-M."/>
            <person name="Dubois J."/>
            <person name="Aldredge T."/>
            <person name="Bashirzadeh R."/>
            <person name="Blakely D."/>
            <person name="Cook R."/>
            <person name="Gilbert K."/>
            <person name="Harrison D."/>
            <person name="Hoang L."/>
            <person name="Keagle P."/>
            <person name="Lumm W."/>
            <person name="Pothier B."/>
            <person name="Qiu D."/>
            <person name="Spadafora R."/>
            <person name="Vicare R."/>
            <person name="Wang Y."/>
            <person name="Wierzbowski J."/>
            <person name="Gibson R."/>
            <person name="Jiwani N."/>
            <person name="Caruso A."/>
            <person name="Bush D."/>
            <person name="Safer H."/>
            <person name="Patwell D."/>
            <person name="Prabhakar S."/>
            <person name="McDougall S."/>
            <person name="Shimer G."/>
            <person name="Goyal A."/>
            <person name="Pietrovski S."/>
            <person name="Church G.M."/>
            <person name="Daniels C.J."/>
            <person name="Mao J.-I."/>
            <person name="Rice P."/>
            <person name="Noelling J."/>
            <person name="Reeve J.N."/>
        </authorList>
    </citation>
    <scope>NUCLEOTIDE SEQUENCE [LARGE SCALE GENOMIC DNA]</scope>
    <source>
        <strain>ATCC 29096 / DSM 1053 / JCM 10044 / NBRC 100330 / Delta H</strain>
    </source>
</reference>
<name>PHOU2_METTH</name>
<organism>
    <name type="scientific">Methanothermobacter thermautotrophicus (strain ATCC 29096 / DSM 1053 / JCM 10044 / NBRC 100330 / Delta H)</name>
    <name type="common">Methanobacterium thermoautotrophicum</name>
    <dbReference type="NCBI Taxonomy" id="187420"/>
    <lineage>
        <taxon>Archaea</taxon>
        <taxon>Methanobacteriati</taxon>
        <taxon>Methanobacteriota</taxon>
        <taxon>Methanomada group</taxon>
        <taxon>Methanobacteria</taxon>
        <taxon>Methanobacteriales</taxon>
        <taxon>Methanobacteriaceae</taxon>
        <taxon>Methanothermobacter</taxon>
    </lineage>
</organism>
<keyword id="KW-0963">Cytoplasm</keyword>
<keyword id="KW-0592">Phosphate transport</keyword>
<keyword id="KW-1185">Reference proteome</keyword>
<keyword id="KW-0813">Transport</keyword>